<gene>
    <name evidence="1" type="primary">menG</name>
    <name type="ordered locus">Cpar_0457</name>
</gene>
<reference key="1">
    <citation type="submission" date="2008-06" db="EMBL/GenBank/DDBJ databases">
        <title>Complete sequence of Chlorobaculum parvum NCIB 8327.</title>
        <authorList>
            <consortium name="US DOE Joint Genome Institute"/>
            <person name="Lucas S."/>
            <person name="Copeland A."/>
            <person name="Lapidus A."/>
            <person name="Glavina del Rio T."/>
            <person name="Dalin E."/>
            <person name="Tice H."/>
            <person name="Bruce D."/>
            <person name="Goodwin L."/>
            <person name="Pitluck S."/>
            <person name="Schmutz J."/>
            <person name="Larimer F."/>
            <person name="Land M."/>
            <person name="Hauser L."/>
            <person name="Kyrpides N."/>
            <person name="Mikhailova N."/>
            <person name="Zhao F."/>
            <person name="Li T."/>
            <person name="Liu Z."/>
            <person name="Overmann J."/>
            <person name="Bryant D.A."/>
            <person name="Richardson P."/>
        </authorList>
    </citation>
    <scope>NUCLEOTIDE SEQUENCE [LARGE SCALE GENOMIC DNA]</scope>
    <source>
        <strain>DSM 263 / NCIMB 8327</strain>
    </source>
</reference>
<accession>B3QLI9</accession>
<evidence type="ECO:0000255" key="1">
    <source>
        <dbReference type="HAMAP-Rule" id="MF_01813"/>
    </source>
</evidence>
<comment type="function">
    <text evidence="1">Methyltransferase required for the conversion of demethylmenaquinol (DMKH2) to menaquinol (MKH2).</text>
</comment>
<comment type="catalytic activity">
    <reaction evidence="1">
        <text>a 2-demethylmenaquinol + S-adenosyl-L-methionine = a menaquinol + S-adenosyl-L-homocysteine + H(+)</text>
        <dbReference type="Rhea" id="RHEA:42640"/>
        <dbReference type="Rhea" id="RHEA-COMP:9539"/>
        <dbReference type="Rhea" id="RHEA-COMP:9563"/>
        <dbReference type="ChEBI" id="CHEBI:15378"/>
        <dbReference type="ChEBI" id="CHEBI:18151"/>
        <dbReference type="ChEBI" id="CHEBI:55437"/>
        <dbReference type="ChEBI" id="CHEBI:57856"/>
        <dbReference type="ChEBI" id="CHEBI:59789"/>
        <dbReference type="EC" id="2.1.1.163"/>
    </reaction>
</comment>
<comment type="pathway">
    <text evidence="1">Quinol/quinone metabolism; menaquinone biosynthesis; menaquinol from 1,4-dihydroxy-2-naphthoate: step 2/2.</text>
</comment>
<comment type="similarity">
    <text evidence="1">Belongs to the class I-like SAM-binding methyltransferase superfamily. MenG/UbiE family.</text>
</comment>
<proteinExistence type="inferred from homology"/>
<dbReference type="EC" id="2.1.1.163" evidence="1"/>
<dbReference type="EMBL" id="CP001099">
    <property type="protein sequence ID" value="ACF10879.1"/>
    <property type="molecule type" value="Genomic_DNA"/>
</dbReference>
<dbReference type="RefSeq" id="WP_012501712.1">
    <property type="nucleotide sequence ID" value="NC_011027.1"/>
</dbReference>
<dbReference type="SMR" id="B3QLI9"/>
<dbReference type="STRING" id="517417.Cpar_0457"/>
<dbReference type="KEGG" id="cpc:Cpar_0457"/>
<dbReference type="eggNOG" id="COG2226">
    <property type="taxonomic scope" value="Bacteria"/>
</dbReference>
<dbReference type="HOGENOM" id="CLU_037990_0_0_10"/>
<dbReference type="OrthoDB" id="9808140at2"/>
<dbReference type="UniPathway" id="UPA00079">
    <property type="reaction ID" value="UER00169"/>
</dbReference>
<dbReference type="Proteomes" id="UP000008811">
    <property type="component" value="Chromosome"/>
</dbReference>
<dbReference type="GO" id="GO:0043770">
    <property type="term" value="F:demethylmenaquinone methyltransferase activity"/>
    <property type="evidence" value="ECO:0007669"/>
    <property type="project" value="UniProtKB-UniRule"/>
</dbReference>
<dbReference type="GO" id="GO:0009234">
    <property type="term" value="P:menaquinone biosynthetic process"/>
    <property type="evidence" value="ECO:0007669"/>
    <property type="project" value="UniProtKB-UniRule"/>
</dbReference>
<dbReference type="GO" id="GO:0032259">
    <property type="term" value="P:methylation"/>
    <property type="evidence" value="ECO:0007669"/>
    <property type="project" value="UniProtKB-KW"/>
</dbReference>
<dbReference type="CDD" id="cd02440">
    <property type="entry name" value="AdoMet_MTases"/>
    <property type="match status" value="1"/>
</dbReference>
<dbReference type="Gene3D" id="3.40.50.150">
    <property type="entry name" value="Vaccinia Virus protein VP39"/>
    <property type="match status" value="1"/>
</dbReference>
<dbReference type="HAMAP" id="MF_01813">
    <property type="entry name" value="MenG_UbiE_methyltr"/>
    <property type="match status" value="1"/>
</dbReference>
<dbReference type="InterPro" id="IPR029063">
    <property type="entry name" value="SAM-dependent_MTases_sf"/>
</dbReference>
<dbReference type="InterPro" id="IPR004033">
    <property type="entry name" value="UbiE/COQ5_MeTrFase"/>
</dbReference>
<dbReference type="InterPro" id="IPR023576">
    <property type="entry name" value="UbiE/COQ5_MeTrFase_CS"/>
</dbReference>
<dbReference type="NCBIfam" id="TIGR01934">
    <property type="entry name" value="MenG_MenH_UbiE"/>
    <property type="match status" value="1"/>
</dbReference>
<dbReference type="NCBIfam" id="NF001244">
    <property type="entry name" value="PRK00216.1-5"/>
    <property type="match status" value="1"/>
</dbReference>
<dbReference type="PANTHER" id="PTHR43591:SF24">
    <property type="entry name" value="2-METHOXY-6-POLYPRENYL-1,4-BENZOQUINOL METHYLASE, MITOCHONDRIAL"/>
    <property type="match status" value="1"/>
</dbReference>
<dbReference type="PANTHER" id="PTHR43591">
    <property type="entry name" value="METHYLTRANSFERASE"/>
    <property type="match status" value="1"/>
</dbReference>
<dbReference type="Pfam" id="PF01209">
    <property type="entry name" value="Ubie_methyltran"/>
    <property type="match status" value="1"/>
</dbReference>
<dbReference type="SUPFAM" id="SSF53335">
    <property type="entry name" value="S-adenosyl-L-methionine-dependent methyltransferases"/>
    <property type="match status" value="1"/>
</dbReference>
<dbReference type="PROSITE" id="PS51608">
    <property type="entry name" value="SAM_MT_UBIE"/>
    <property type="match status" value="1"/>
</dbReference>
<dbReference type="PROSITE" id="PS01183">
    <property type="entry name" value="UBIE_1"/>
    <property type="match status" value="1"/>
</dbReference>
<sequence length="241" mass="27108">MSSSKETAKSLIQTKSRSSIRNMFDEVAPTYDFLNHLLSLGIDNYWRVVAAKKARKQVEGEREPKILDVATGTGDLAASMAKIPGAKVTGYDLSPEMLAIARKKYPNIEFHEGFAEKMPFADQSFHVVSAGFGVRNFEDLAQGMKEFHRVLKPGGCAYIIEPMIPRNPVMKKLYLIYFKNVLPKIAGMFSKSTFAYDYLPNSVEQFPQAEAFTKILKQAGFKKAEFFPMTFETSILYVATK</sequence>
<feature type="chain" id="PRO_1000187744" description="Demethylmenaquinone methyltransferase">
    <location>
        <begin position="1"/>
        <end position="241"/>
    </location>
</feature>
<feature type="binding site" evidence="1">
    <location>
        <position position="73"/>
    </location>
    <ligand>
        <name>S-adenosyl-L-methionine</name>
        <dbReference type="ChEBI" id="CHEBI:59789"/>
    </ligand>
</feature>
<feature type="binding site" evidence="1">
    <location>
        <position position="92"/>
    </location>
    <ligand>
        <name>S-adenosyl-L-methionine</name>
        <dbReference type="ChEBI" id="CHEBI:59789"/>
    </ligand>
</feature>
<organism>
    <name type="scientific">Chlorobaculum parvum (strain DSM 263 / NCIMB 8327)</name>
    <name type="common">Chlorobium vibrioforme subsp. thiosulfatophilum</name>
    <dbReference type="NCBI Taxonomy" id="517417"/>
    <lineage>
        <taxon>Bacteria</taxon>
        <taxon>Pseudomonadati</taxon>
        <taxon>Chlorobiota</taxon>
        <taxon>Chlorobiia</taxon>
        <taxon>Chlorobiales</taxon>
        <taxon>Chlorobiaceae</taxon>
        <taxon>Chlorobaculum</taxon>
    </lineage>
</organism>
<keyword id="KW-0474">Menaquinone biosynthesis</keyword>
<keyword id="KW-0489">Methyltransferase</keyword>
<keyword id="KW-0949">S-adenosyl-L-methionine</keyword>
<keyword id="KW-0808">Transferase</keyword>
<protein>
    <recommendedName>
        <fullName evidence="1">Demethylmenaquinone methyltransferase</fullName>
        <ecNumber evidence="1">2.1.1.163</ecNumber>
    </recommendedName>
</protein>
<name>MENG_CHLP8</name>